<proteinExistence type="inferred from homology"/>
<organism>
    <name type="scientific">Parvibaculum lavamentivorans (strain DS-1 / DSM 13023 / NCIMB 13966)</name>
    <dbReference type="NCBI Taxonomy" id="402881"/>
    <lineage>
        <taxon>Bacteria</taxon>
        <taxon>Pseudomonadati</taxon>
        <taxon>Pseudomonadota</taxon>
        <taxon>Alphaproteobacteria</taxon>
        <taxon>Hyphomicrobiales</taxon>
        <taxon>Parvibaculaceae</taxon>
        <taxon>Parvibaculum</taxon>
    </lineage>
</organism>
<feature type="chain" id="PRO_1000072324" description="Ketol-acid reductoisomerase (NADP(+))">
    <location>
        <begin position="1"/>
        <end position="339"/>
    </location>
</feature>
<feature type="domain" description="KARI N-terminal Rossmann" evidence="2">
    <location>
        <begin position="1"/>
        <end position="182"/>
    </location>
</feature>
<feature type="domain" description="KARI C-terminal knotted" evidence="3">
    <location>
        <begin position="183"/>
        <end position="328"/>
    </location>
</feature>
<feature type="active site" evidence="1">
    <location>
        <position position="108"/>
    </location>
</feature>
<feature type="binding site" evidence="1">
    <location>
        <begin position="24"/>
        <end position="27"/>
    </location>
    <ligand>
        <name>NADP(+)</name>
        <dbReference type="ChEBI" id="CHEBI:58349"/>
    </ligand>
</feature>
<feature type="binding site" evidence="1">
    <location>
        <position position="48"/>
    </location>
    <ligand>
        <name>NADP(+)</name>
        <dbReference type="ChEBI" id="CHEBI:58349"/>
    </ligand>
</feature>
<feature type="binding site" evidence="1">
    <location>
        <position position="51"/>
    </location>
    <ligand>
        <name>NADP(+)</name>
        <dbReference type="ChEBI" id="CHEBI:58349"/>
    </ligand>
</feature>
<feature type="binding site" evidence="1">
    <location>
        <position position="53"/>
    </location>
    <ligand>
        <name>NADP(+)</name>
        <dbReference type="ChEBI" id="CHEBI:58349"/>
    </ligand>
</feature>
<feature type="binding site" evidence="1">
    <location>
        <begin position="83"/>
        <end position="86"/>
    </location>
    <ligand>
        <name>NADP(+)</name>
        <dbReference type="ChEBI" id="CHEBI:58349"/>
    </ligand>
</feature>
<feature type="binding site" evidence="1">
    <location>
        <position position="134"/>
    </location>
    <ligand>
        <name>NADP(+)</name>
        <dbReference type="ChEBI" id="CHEBI:58349"/>
    </ligand>
</feature>
<feature type="binding site" evidence="1">
    <location>
        <position position="191"/>
    </location>
    <ligand>
        <name>Mg(2+)</name>
        <dbReference type="ChEBI" id="CHEBI:18420"/>
        <label>1</label>
    </ligand>
</feature>
<feature type="binding site" evidence="1">
    <location>
        <position position="191"/>
    </location>
    <ligand>
        <name>Mg(2+)</name>
        <dbReference type="ChEBI" id="CHEBI:18420"/>
        <label>2</label>
    </ligand>
</feature>
<feature type="binding site" evidence="1">
    <location>
        <position position="195"/>
    </location>
    <ligand>
        <name>Mg(2+)</name>
        <dbReference type="ChEBI" id="CHEBI:18420"/>
        <label>1</label>
    </ligand>
</feature>
<feature type="binding site" evidence="1">
    <location>
        <position position="227"/>
    </location>
    <ligand>
        <name>Mg(2+)</name>
        <dbReference type="ChEBI" id="CHEBI:18420"/>
        <label>2</label>
    </ligand>
</feature>
<feature type="binding site" evidence="1">
    <location>
        <position position="231"/>
    </location>
    <ligand>
        <name>Mg(2+)</name>
        <dbReference type="ChEBI" id="CHEBI:18420"/>
        <label>2</label>
    </ligand>
</feature>
<feature type="binding site" evidence="1">
    <location>
        <position position="252"/>
    </location>
    <ligand>
        <name>substrate</name>
    </ligand>
</feature>
<accession>A7HVZ2</accession>
<evidence type="ECO:0000255" key="1">
    <source>
        <dbReference type="HAMAP-Rule" id="MF_00435"/>
    </source>
</evidence>
<evidence type="ECO:0000255" key="2">
    <source>
        <dbReference type="PROSITE-ProRule" id="PRU01197"/>
    </source>
</evidence>
<evidence type="ECO:0000255" key="3">
    <source>
        <dbReference type="PROSITE-ProRule" id="PRU01198"/>
    </source>
</evidence>
<name>ILVC_PARL1</name>
<keyword id="KW-0028">Amino-acid biosynthesis</keyword>
<keyword id="KW-0100">Branched-chain amino acid biosynthesis</keyword>
<keyword id="KW-0460">Magnesium</keyword>
<keyword id="KW-0479">Metal-binding</keyword>
<keyword id="KW-0521">NADP</keyword>
<keyword id="KW-0560">Oxidoreductase</keyword>
<keyword id="KW-1185">Reference proteome</keyword>
<comment type="function">
    <text evidence="1">Involved in the biosynthesis of branched-chain amino acids (BCAA). Catalyzes an alkyl-migration followed by a ketol-acid reduction of (S)-2-acetolactate (S2AL) to yield (R)-2,3-dihydroxy-isovalerate. In the isomerase reaction, S2AL is rearranged via a Mg-dependent methyl migration to produce 3-hydroxy-3-methyl-2-ketobutyrate (HMKB). In the reductase reaction, this 2-ketoacid undergoes a metal-dependent reduction by NADPH to yield (R)-2,3-dihydroxy-isovalerate.</text>
</comment>
<comment type="catalytic activity">
    <reaction evidence="1">
        <text>(2R)-2,3-dihydroxy-3-methylbutanoate + NADP(+) = (2S)-2-acetolactate + NADPH + H(+)</text>
        <dbReference type="Rhea" id="RHEA:22068"/>
        <dbReference type="ChEBI" id="CHEBI:15378"/>
        <dbReference type="ChEBI" id="CHEBI:49072"/>
        <dbReference type="ChEBI" id="CHEBI:57783"/>
        <dbReference type="ChEBI" id="CHEBI:58349"/>
        <dbReference type="ChEBI" id="CHEBI:58476"/>
        <dbReference type="EC" id="1.1.1.86"/>
    </reaction>
</comment>
<comment type="catalytic activity">
    <reaction evidence="1">
        <text>(2R,3R)-2,3-dihydroxy-3-methylpentanoate + NADP(+) = (S)-2-ethyl-2-hydroxy-3-oxobutanoate + NADPH + H(+)</text>
        <dbReference type="Rhea" id="RHEA:13493"/>
        <dbReference type="ChEBI" id="CHEBI:15378"/>
        <dbReference type="ChEBI" id="CHEBI:49256"/>
        <dbReference type="ChEBI" id="CHEBI:49258"/>
        <dbReference type="ChEBI" id="CHEBI:57783"/>
        <dbReference type="ChEBI" id="CHEBI:58349"/>
        <dbReference type="EC" id="1.1.1.86"/>
    </reaction>
</comment>
<comment type="cofactor">
    <cofactor evidence="1">
        <name>Mg(2+)</name>
        <dbReference type="ChEBI" id="CHEBI:18420"/>
    </cofactor>
    <text evidence="1">Binds 2 magnesium ions per subunit.</text>
</comment>
<comment type="pathway">
    <text evidence="1">Amino-acid biosynthesis; L-isoleucine biosynthesis; L-isoleucine from 2-oxobutanoate: step 2/4.</text>
</comment>
<comment type="pathway">
    <text evidence="1">Amino-acid biosynthesis; L-valine biosynthesis; L-valine from pyruvate: step 2/4.</text>
</comment>
<comment type="similarity">
    <text evidence="1">Belongs to the ketol-acid reductoisomerase family.</text>
</comment>
<reference key="1">
    <citation type="journal article" date="2011" name="Stand. Genomic Sci.">
        <title>Complete genome sequence of Parvibaculum lavamentivorans type strain (DS-1(T)).</title>
        <authorList>
            <person name="Schleheck D."/>
            <person name="Weiss M."/>
            <person name="Pitluck S."/>
            <person name="Bruce D."/>
            <person name="Land M.L."/>
            <person name="Han S."/>
            <person name="Saunders E."/>
            <person name="Tapia R."/>
            <person name="Detter C."/>
            <person name="Brettin T."/>
            <person name="Han J."/>
            <person name="Woyke T."/>
            <person name="Goodwin L."/>
            <person name="Pennacchio L."/>
            <person name="Nolan M."/>
            <person name="Cook A.M."/>
            <person name="Kjelleberg S."/>
            <person name="Thomas T."/>
        </authorList>
    </citation>
    <scope>NUCLEOTIDE SEQUENCE [LARGE SCALE GENOMIC DNA]</scope>
    <source>
        <strain>DS-1 / DSM 13023 / NCIMB 13966</strain>
    </source>
</reference>
<sequence>MRVYYDRDADVNLIKGKKVAIIGYGSQGHAHALNLRDSGVKEVAVALRAGSATAKKAEGEGLKVMTVADAAKWADVLMMLTPDELQADIYYADLHENMKPGSALLFAHGLNIHFNLIEPRKDIDVLMVAPKGPGHTVRSEYKRGGGVPSLIAVHQDATGNAHDVGLSYASANGGGRAGIIETTFREECETDLFGEQVVLCGGLVELIRAGFETLTEAGYAPEMAYFECLHEVKLIVDLIYEGGIANMNYSISNTAEYGEYVTGPRIITPETKAEMKRVLHDIQSGKFTRDWMLENKVNQTSFKATRAAAAAHPIEEVGARLREMMPWISANKLVDKAKN</sequence>
<dbReference type="EC" id="1.1.1.86" evidence="1"/>
<dbReference type="EMBL" id="CP000774">
    <property type="protein sequence ID" value="ABS64075.1"/>
    <property type="molecule type" value="Genomic_DNA"/>
</dbReference>
<dbReference type="RefSeq" id="WP_012111386.1">
    <property type="nucleotide sequence ID" value="NC_009719.1"/>
</dbReference>
<dbReference type="SMR" id="A7HVZ2"/>
<dbReference type="STRING" id="402881.Plav_2466"/>
<dbReference type="KEGG" id="pla:Plav_2466"/>
<dbReference type="eggNOG" id="COG0059">
    <property type="taxonomic scope" value="Bacteria"/>
</dbReference>
<dbReference type="HOGENOM" id="CLU_033821_0_1_5"/>
<dbReference type="OrthoDB" id="9804088at2"/>
<dbReference type="UniPathway" id="UPA00047">
    <property type="reaction ID" value="UER00056"/>
</dbReference>
<dbReference type="UniPathway" id="UPA00049">
    <property type="reaction ID" value="UER00060"/>
</dbReference>
<dbReference type="Proteomes" id="UP000006377">
    <property type="component" value="Chromosome"/>
</dbReference>
<dbReference type="GO" id="GO:0005829">
    <property type="term" value="C:cytosol"/>
    <property type="evidence" value="ECO:0007669"/>
    <property type="project" value="TreeGrafter"/>
</dbReference>
<dbReference type="GO" id="GO:0004455">
    <property type="term" value="F:ketol-acid reductoisomerase activity"/>
    <property type="evidence" value="ECO:0007669"/>
    <property type="project" value="UniProtKB-UniRule"/>
</dbReference>
<dbReference type="GO" id="GO:0000287">
    <property type="term" value="F:magnesium ion binding"/>
    <property type="evidence" value="ECO:0007669"/>
    <property type="project" value="UniProtKB-UniRule"/>
</dbReference>
<dbReference type="GO" id="GO:0050661">
    <property type="term" value="F:NADP binding"/>
    <property type="evidence" value="ECO:0007669"/>
    <property type="project" value="InterPro"/>
</dbReference>
<dbReference type="GO" id="GO:0009097">
    <property type="term" value="P:isoleucine biosynthetic process"/>
    <property type="evidence" value="ECO:0007669"/>
    <property type="project" value="UniProtKB-UniRule"/>
</dbReference>
<dbReference type="GO" id="GO:0009099">
    <property type="term" value="P:L-valine biosynthetic process"/>
    <property type="evidence" value="ECO:0007669"/>
    <property type="project" value="UniProtKB-UniRule"/>
</dbReference>
<dbReference type="FunFam" id="3.40.50.720:FF:000023">
    <property type="entry name" value="Ketol-acid reductoisomerase (NADP(+))"/>
    <property type="match status" value="1"/>
</dbReference>
<dbReference type="Gene3D" id="6.10.240.10">
    <property type="match status" value="1"/>
</dbReference>
<dbReference type="Gene3D" id="3.40.50.720">
    <property type="entry name" value="NAD(P)-binding Rossmann-like Domain"/>
    <property type="match status" value="1"/>
</dbReference>
<dbReference type="HAMAP" id="MF_00435">
    <property type="entry name" value="IlvC"/>
    <property type="match status" value="1"/>
</dbReference>
<dbReference type="InterPro" id="IPR008927">
    <property type="entry name" value="6-PGluconate_DH-like_C_sf"/>
</dbReference>
<dbReference type="InterPro" id="IPR013023">
    <property type="entry name" value="KARI"/>
</dbReference>
<dbReference type="InterPro" id="IPR000506">
    <property type="entry name" value="KARI_C"/>
</dbReference>
<dbReference type="InterPro" id="IPR013116">
    <property type="entry name" value="KARI_N"/>
</dbReference>
<dbReference type="InterPro" id="IPR014359">
    <property type="entry name" value="KARI_prok"/>
</dbReference>
<dbReference type="InterPro" id="IPR036291">
    <property type="entry name" value="NAD(P)-bd_dom_sf"/>
</dbReference>
<dbReference type="NCBIfam" id="TIGR00465">
    <property type="entry name" value="ilvC"/>
    <property type="match status" value="1"/>
</dbReference>
<dbReference type="NCBIfam" id="NF004017">
    <property type="entry name" value="PRK05479.1"/>
    <property type="match status" value="1"/>
</dbReference>
<dbReference type="NCBIfam" id="NF009940">
    <property type="entry name" value="PRK13403.1"/>
    <property type="match status" value="1"/>
</dbReference>
<dbReference type="PANTHER" id="PTHR21371">
    <property type="entry name" value="KETOL-ACID REDUCTOISOMERASE, MITOCHONDRIAL"/>
    <property type="match status" value="1"/>
</dbReference>
<dbReference type="PANTHER" id="PTHR21371:SF1">
    <property type="entry name" value="KETOL-ACID REDUCTOISOMERASE, MITOCHONDRIAL"/>
    <property type="match status" value="1"/>
</dbReference>
<dbReference type="Pfam" id="PF01450">
    <property type="entry name" value="KARI_C"/>
    <property type="match status" value="1"/>
</dbReference>
<dbReference type="Pfam" id="PF07991">
    <property type="entry name" value="KARI_N"/>
    <property type="match status" value="1"/>
</dbReference>
<dbReference type="PIRSF" id="PIRSF000116">
    <property type="entry name" value="IlvC_gammaproteo"/>
    <property type="match status" value="1"/>
</dbReference>
<dbReference type="SUPFAM" id="SSF48179">
    <property type="entry name" value="6-phosphogluconate dehydrogenase C-terminal domain-like"/>
    <property type="match status" value="1"/>
</dbReference>
<dbReference type="SUPFAM" id="SSF51735">
    <property type="entry name" value="NAD(P)-binding Rossmann-fold domains"/>
    <property type="match status" value="1"/>
</dbReference>
<dbReference type="PROSITE" id="PS51851">
    <property type="entry name" value="KARI_C"/>
    <property type="match status" value="1"/>
</dbReference>
<dbReference type="PROSITE" id="PS51850">
    <property type="entry name" value="KARI_N"/>
    <property type="match status" value="1"/>
</dbReference>
<protein>
    <recommendedName>
        <fullName evidence="1">Ketol-acid reductoisomerase (NADP(+))</fullName>
        <shortName evidence="1">KARI</shortName>
        <ecNumber evidence="1">1.1.1.86</ecNumber>
    </recommendedName>
    <alternativeName>
        <fullName evidence="1">Acetohydroxy-acid isomeroreductase</fullName>
        <shortName evidence="1">AHIR</shortName>
    </alternativeName>
    <alternativeName>
        <fullName evidence="1">Alpha-keto-beta-hydroxylacyl reductoisomerase</fullName>
    </alternativeName>
    <alternativeName>
        <fullName evidence="1">Ketol-acid reductoisomerase type 1</fullName>
    </alternativeName>
    <alternativeName>
        <fullName evidence="1">Ketol-acid reductoisomerase type I</fullName>
    </alternativeName>
</protein>
<gene>
    <name evidence="1" type="primary">ilvC</name>
    <name type="ordered locus">Plav_2466</name>
</gene>